<evidence type="ECO:0000255" key="1">
    <source>
        <dbReference type="HAMAP-Rule" id="MF_00391"/>
    </source>
</evidence>
<evidence type="ECO:0000256" key="2">
    <source>
        <dbReference type="SAM" id="MobiDB-lite"/>
    </source>
</evidence>
<evidence type="ECO:0000305" key="3"/>
<dbReference type="EMBL" id="CP000744">
    <property type="protein sequence ID" value="ABR85969.1"/>
    <property type="molecule type" value="Genomic_DNA"/>
</dbReference>
<dbReference type="RefSeq" id="WP_003100258.1">
    <property type="nucleotide sequence ID" value="NC_009656.1"/>
</dbReference>
<dbReference type="SMR" id="A6VF47"/>
<dbReference type="GeneID" id="79911171"/>
<dbReference type="KEGG" id="pap:PSPA7_6371"/>
<dbReference type="HOGENOM" id="CLU_129938_2_0_6"/>
<dbReference type="Proteomes" id="UP000001582">
    <property type="component" value="Chromosome"/>
</dbReference>
<dbReference type="GO" id="GO:1990904">
    <property type="term" value="C:ribonucleoprotein complex"/>
    <property type="evidence" value="ECO:0007669"/>
    <property type="project" value="UniProtKB-KW"/>
</dbReference>
<dbReference type="GO" id="GO:0005840">
    <property type="term" value="C:ribosome"/>
    <property type="evidence" value="ECO:0007669"/>
    <property type="project" value="UniProtKB-KW"/>
</dbReference>
<dbReference type="GO" id="GO:0003735">
    <property type="term" value="F:structural constituent of ribosome"/>
    <property type="evidence" value="ECO:0007669"/>
    <property type="project" value="InterPro"/>
</dbReference>
<dbReference type="GO" id="GO:0006412">
    <property type="term" value="P:translation"/>
    <property type="evidence" value="ECO:0007669"/>
    <property type="project" value="UniProtKB-UniRule"/>
</dbReference>
<dbReference type="FunFam" id="1.10.287.3980:FF:000001">
    <property type="entry name" value="Mitochondrial ribosomal protein L34"/>
    <property type="match status" value="1"/>
</dbReference>
<dbReference type="Gene3D" id="1.10.287.3980">
    <property type="match status" value="1"/>
</dbReference>
<dbReference type="HAMAP" id="MF_00391">
    <property type="entry name" value="Ribosomal_bL34"/>
    <property type="match status" value="1"/>
</dbReference>
<dbReference type="InterPro" id="IPR000271">
    <property type="entry name" value="Ribosomal_bL34"/>
</dbReference>
<dbReference type="InterPro" id="IPR020939">
    <property type="entry name" value="Ribosomal_bL34_CS"/>
</dbReference>
<dbReference type="NCBIfam" id="TIGR01030">
    <property type="entry name" value="rpmH_bact"/>
    <property type="match status" value="1"/>
</dbReference>
<dbReference type="PANTHER" id="PTHR14503:SF4">
    <property type="entry name" value="LARGE RIBOSOMAL SUBUNIT PROTEIN BL34M"/>
    <property type="match status" value="1"/>
</dbReference>
<dbReference type="PANTHER" id="PTHR14503">
    <property type="entry name" value="MITOCHONDRIAL RIBOSOMAL PROTEIN 34 FAMILY MEMBER"/>
    <property type="match status" value="1"/>
</dbReference>
<dbReference type="Pfam" id="PF00468">
    <property type="entry name" value="Ribosomal_L34"/>
    <property type="match status" value="1"/>
</dbReference>
<dbReference type="PROSITE" id="PS00784">
    <property type="entry name" value="RIBOSOMAL_L34"/>
    <property type="match status" value="1"/>
</dbReference>
<keyword id="KW-0687">Ribonucleoprotein</keyword>
<keyword id="KW-0689">Ribosomal protein</keyword>
<accession>A6VF47</accession>
<comment type="similarity">
    <text evidence="1">Belongs to the bacterial ribosomal protein bL34 family.</text>
</comment>
<name>RL34_PSEP7</name>
<gene>
    <name evidence="1" type="primary">rpmH</name>
    <name type="ordered locus">PSPA7_6371</name>
</gene>
<organism>
    <name type="scientific">Pseudomonas paraeruginosa (strain DSM 24068 / PA7)</name>
    <name type="common">Pseudomonas aeruginosa (strain PA7)</name>
    <dbReference type="NCBI Taxonomy" id="381754"/>
    <lineage>
        <taxon>Bacteria</taxon>
        <taxon>Pseudomonadati</taxon>
        <taxon>Pseudomonadota</taxon>
        <taxon>Gammaproteobacteria</taxon>
        <taxon>Pseudomonadales</taxon>
        <taxon>Pseudomonadaceae</taxon>
        <taxon>Pseudomonas</taxon>
        <taxon>Pseudomonas paraeruginosa</taxon>
    </lineage>
</organism>
<sequence>MKRTFQPSTLKRARVHGFRARMATKNGRQVLSRRRAKGRKRLTV</sequence>
<feature type="chain" id="PRO_1000013407" description="Large ribosomal subunit protein bL34">
    <location>
        <begin position="1"/>
        <end position="44"/>
    </location>
</feature>
<feature type="region of interest" description="Disordered" evidence="2">
    <location>
        <begin position="24"/>
        <end position="44"/>
    </location>
</feature>
<feature type="compositionally biased region" description="Basic residues" evidence="2">
    <location>
        <begin position="31"/>
        <end position="44"/>
    </location>
</feature>
<protein>
    <recommendedName>
        <fullName evidence="1">Large ribosomal subunit protein bL34</fullName>
    </recommendedName>
    <alternativeName>
        <fullName evidence="3">50S ribosomal protein L34</fullName>
    </alternativeName>
</protein>
<proteinExistence type="inferred from homology"/>
<reference key="1">
    <citation type="submission" date="2007-06" db="EMBL/GenBank/DDBJ databases">
        <authorList>
            <person name="Dodson R.J."/>
            <person name="Harkins D."/>
            <person name="Paulsen I.T."/>
        </authorList>
    </citation>
    <scope>NUCLEOTIDE SEQUENCE [LARGE SCALE GENOMIC DNA]</scope>
    <source>
        <strain>DSM 24068 / PA7</strain>
    </source>
</reference>